<comment type="subcellular location">
    <subcellularLocation>
        <location evidence="1">Secreted</location>
    </subcellularLocation>
</comment>
<comment type="tissue specificity">
    <text evidence="3 4">Both forms widely expressed in the nervous system. Expressed in corpora cardiaca, corpora allata, hypocerebral ganglion, frontal ganglion, frontal connectives, recurrent nerve, esophageal nerves, protocerebrum, pars intercerebralis, antennal lobe, tritocerebrum, circumesophageal connectives, subesophageal ganglion, thoracic ganglia and abdominal ganglia. Not detected in abdominal perisympathetic organs (at protein level).</text>
</comment>
<comment type="mass spectrometry" mass="1330.8" method="MALDI" evidence="3">
    <molecule>Short neuropeptide F</molecule>
</comment>
<comment type="mass spectrometry" mass="973.6" method="MALDI" evidence="3">
    <molecule>Short neuropeptide F4-11</molecule>
</comment>
<comment type="similarity">
    <text evidence="2">Belongs to the NPY family.</text>
</comment>
<organism>
    <name type="scientific">Locusta migratoria</name>
    <name type="common">Migratory locust</name>
    <dbReference type="NCBI Taxonomy" id="7004"/>
    <lineage>
        <taxon>Eukaryota</taxon>
        <taxon>Metazoa</taxon>
        <taxon>Ecdysozoa</taxon>
        <taxon>Arthropoda</taxon>
        <taxon>Hexapoda</taxon>
        <taxon>Insecta</taxon>
        <taxon>Pterygota</taxon>
        <taxon>Neoptera</taxon>
        <taxon>Polyneoptera</taxon>
        <taxon>Orthoptera</taxon>
        <taxon>Caelifera</taxon>
        <taxon>Acrididea</taxon>
        <taxon>Acridomorpha</taxon>
        <taxon>Acridoidea</taxon>
        <taxon>Acrididae</taxon>
        <taxon>Oedipodinae</taxon>
        <taxon>Locusta</taxon>
    </lineage>
</organism>
<feature type="peptide" id="PRO_0000392447" description="Short neuropeptide F" evidence="3">
    <location>
        <begin position="1"/>
        <end position="11"/>
    </location>
</feature>
<feature type="peptide" id="PRO_0000392448" description="Short neuropeptide F4-11" evidence="3">
    <location>
        <begin position="4"/>
        <end position="11"/>
    </location>
</feature>
<feature type="modified residue" description="Phenylalanine amide" evidence="3">
    <location>
        <position position="11"/>
    </location>
</feature>
<feature type="unsure residue" description="L or I" evidence="3">
    <location>
        <position position="7"/>
    </location>
</feature>
<feature type="unsure residue" description="L or I" evidence="3">
    <location>
        <position position="9"/>
    </location>
</feature>
<name>SNPF_LOCMI</name>
<accession>P86444</accession>
<dbReference type="GO" id="GO:0005576">
    <property type="term" value="C:extracellular region"/>
    <property type="evidence" value="ECO:0007669"/>
    <property type="project" value="UniProtKB-SubCell"/>
</dbReference>
<dbReference type="GO" id="GO:0007218">
    <property type="term" value="P:neuropeptide signaling pathway"/>
    <property type="evidence" value="ECO:0007669"/>
    <property type="project" value="UniProtKB-KW"/>
</dbReference>
<protein>
    <recommendedName>
        <fullName evidence="5 6">Short neuropeptide F</fullName>
        <shortName evidence="5 6">Lom-sNPF</shortName>
        <shortName evidence="5 6">sNPF</shortName>
    </recommendedName>
    <component>
        <recommendedName>
            <fullName evidence="5">Short neuropeptide F4-11</fullName>
            <shortName evidence="5">Lom-sNPF4-11</shortName>
        </recommendedName>
    </component>
</protein>
<evidence type="ECO:0000250" key="1">
    <source>
        <dbReference type="UniProtKB" id="Q9VIQ0"/>
    </source>
</evidence>
<evidence type="ECO:0000255" key="2"/>
<evidence type="ECO:0000269" key="3">
    <source>
    </source>
</evidence>
<evidence type="ECO:0000269" key="4">
    <source>
    </source>
</evidence>
<evidence type="ECO:0000303" key="5">
    <source>
    </source>
</evidence>
<evidence type="ECO:0000303" key="6">
    <source>
    </source>
</evidence>
<evidence type="ECO:0000305" key="7"/>
<proteinExistence type="evidence at protein level"/>
<sequence length="11" mass="1333">SNRSPSLRLRF</sequence>
<keyword id="KW-0027">Amidation</keyword>
<keyword id="KW-0903">Direct protein sequencing</keyword>
<keyword id="KW-0527">Neuropeptide</keyword>
<keyword id="KW-0964">Secreted</keyword>
<reference evidence="7" key="1">
    <citation type="journal article" date="2009" name="Ann. N. Y. Acad. Sci.">
        <title>Identification of new members of the (short) neuropeptide F family in locusts and Caenorhabditis elegans.</title>
        <authorList>
            <person name="Clynen E."/>
            <person name="Husson S.J."/>
            <person name="Schoofs L."/>
        </authorList>
    </citation>
    <scope>PROTEIN SEQUENCE</scope>
    <scope>TISSUE SPECIFICITY</scope>
    <scope>MASS SPECTROMETRY</scope>
    <scope>AMIDATION AT PHE-11</scope>
</reference>
<reference evidence="7" key="2">
    <citation type="journal article" date="2009" name="Insect Biochem. Mol. Biol.">
        <title>Peptidomic survey of the locust neuroendocrine system.</title>
        <authorList>
            <person name="Clynen E."/>
            <person name="Schoofs L."/>
        </authorList>
    </citation>
    <scope>IDENTIFICATION BY MASS SPECTROMETRY</scope>
    <scope>TISSUE SPECIFICITY</scope>
</reference>